<feature type="chain" id="PRO_1000045750" description="Protein SlyX">
    <location>
        <begin position="1"/>
        <end position="72"/>
    </location>
</feature>
<feature type="region of interest" description="Disordered" evidence="2">
    <location>
        <begin position="52"/>
        <end position="72"/>
    </location>
</feature>
<feature type="compositionally biased region" description="Polar residues" evidence="2">
    <location>
        <begin position="55"/>
        <end position="65"/>
    </location>
</feature>
<evidence type="ECO:0000255" key="1">
    <source>
        <dbReference type="HAMAP-Rule" id="MF_00715"/>
    </source>
</evidence>
<evidence type="ECO:0000256" key="2">
    <source>
        <dbReference type="SAM" id="MobiDB-lite"/>
    </source>
</evidence>
<protein>
    <recommendedName>
        <fullName evidence="1">Protein SlyX</fullName>
    </recommendedName>
</protein>
<proteinExistence type="inferred from homology"/>
<name>SLYX_YERPP</name>
<organism>
    <name type="scientific">Yersinia pestis (strain Pestoides F)</name>
    <dbReference type="NCBI Taxonomy" id="386656"/>
    <lineage>
        <taxon>Bacteria</taxon>
        <taxon>Pseudomonadati</taxon>
        <taxon>Pseudomonadota</taxon>
        <taxon>Gammaproteobacteria</taxon>
        <taxon>Enterobacterales</taxon>
        <taxon>Yersiniaceae</taxon>
        <taxon>Yersinia</taxon>
    </lineage>
</organism>
<dbReference type="EMBL" id="CP000668">
    <property type="protein sequence ID" value="ABP38541.1"/>
    <property type="molecule type" value="Genomic_DNA"/>
</dbReference>
<dbReference type="RefSeq" id="WP_002212317.1">
    <property type="nucleotide sequence ID" value="NZ_CP009715.1"/>
</dbReference>
<dbReference type="SMR" id="A4TGX8"/>
<dbReference type="KEGG" id="ypp:YPDSF_0119"/>
<dbReference type="PATRIC" id="fig|386656.14.peg.448"/>
<dbReference type="Gene3D" id="1.20.5.300">
    <property type="match status" value="1"/>
</dbReference>
<dbReference type="HAMAP" id="MF_00715">
    <property type="entry name" value="SlyX"/>
    <property type="match status" value="1"/>
</dbReference>
<dbReference type="InterPro" id="IPR007236">
    <property type="entry name" value="SlyX"/>
</dbReference>
<dbReference type="NCBIfam" id="NF002750">
    <property type="entry name" value="PRK02793.1"/>
    <property type="match status" value="1"/>
</dbReference>
<dbReference type="PANTHER" id="PTHR36508">
    <property type="entry name" value="PROTEIN SLYX"/>
    <property type="match status" value="1"/>
</dbReference>
<dbReference type="PANTHER" id="PTHR36508:SF1">
    <property type="entry name" value="PROTEIN SLYX"/>
    <property type="match status" value="1"/>
</dbReference>
<dbReference type="Pfam" id="PF04102">
    <property type="entry name" value="SlyX"/>
    <property type="match status" value="1"/>
</dbReference>
<gene>
    <name evidence="1" type="primary">slyX</name>
    <name type="ordered locus">YPDSF_0119</name>
</gene>
<accession>A4TGX8</accession>
<reference key="1">
    <citation type="submission" date="2007-02" db="EMBL/GenBank/DDBJ databases">
        <title>Complete sequence of chromosome of Yersinia pestis Pestoides F.</title>
        <authorList>
            <consortium name="US DOE Joint Genome Institute"/>
            <person name="Copeland A."/>
            <person name="Lucas S."/>
            <person name="Lapidus A."/>
            <person name="Barry K."/>
            <person name="Detter J.C."/>
            <person name="Glavina del Rio T."/>
            <person name="Hammon N."/>
            <person name="Israni S."/>
            <person name="Dalin E."/>
            <person name="Tice H."/>
            <person name="Pitluck S."/>
            <person name="Di Bartolo G."/>
            <person name="Chain P."/>
            <person name="Malfatti S."/>
            <person name="Shin M."/>
            <person name="Vergez L."/>
            <person name="Schmutz J."/>
            <person name="Larimer F."/>
            <person name="Land M."/>
            <person name="Hauser L."/>
            <person name="Worsham P."/>
            <person name="Chu M."/>
            <person name="Bearden S."/>
            <person name="Garcia E."/>
            <person name="Richardson P."/>
        </authorList>
    </citation>
    <scope>NUCLEOTIDE SEQUENCE [LARGE SCALE GENOMIC DNA]</scope>
    <source>
        <strain>Pestoides F</strain>
    </source>
</reference>
<comment type="similarity">
    <text evidence="1">Belongs to the SlyX family.</text>
</comment>
<sequence>MEQSLLEQRLEMLESRLAFQEVTIEELNLIVTEHQMEMTKLREHLRLLTDKLRESQSSMLASPSEETPPPHY</sequence>